<comment type="function">
    <text evidence="1">One of the components of the core complex of photosystem II (PSII). PSII is a light-driven water:plastoquinone oxidoreductase that uses light energy to abstract electrons from H(2)O, generating O(2) and a proton gradient subsequently used for ATP formation. It consists of a core antenna complex that captures photons, and an electron transfer chain that converts photonic excitation into a charge separation. This subunit is found at the monomer-monomer interface.</text>
</comment>
<comment type="subunit">
    <text evidence="1">PSII is composed of 1 copy each of membrane proteins PsbA, PsbB, PsbC, PsbD, PsbE, PsbF, PsbH, PsbI, PsbJ, PsbK, PsbL, PsbM, PsbT, PsbX, PsbY, PsbZ, Psb30/Ycf12, peripheral proteins PsbO, CyanoQ (PsbQ), PsbU, PsbV and a large number of cofactors. It forms dimeric complexes.</text>
</comment>
<comment type="subcellular location">
    <subcellularLocation>
        <location evidence="1">Cellular thylakoid membrane</location>
        <topology evidence="1">Single-pass membrane protein</topology>
    </subcellularLocation>
</comment>
<comment type="similarity">
    <text evidence="1">Belongs to the PsbM family.</text>
</comment>
<gene>
    <name evidence="1" type="primary">psbM</name>
    <name type="ordered locus">CYA_0642</name>
</gene>
<dbReference type="EMBL" id="CP000239">
    <property type="protein sequence ID" value="ABC98856.1"/>
    <property type="molecule type" value="Genomic_DNA"/>
</dbReference>
<dbReference type="RefSeq" id="WP_011429539.1">
    <property type="nucleotide sequence ID" value="NC_007775.1"/>
</dbReference>
<dbReference type="SMR" id="Q2JWK3"/>
<dbReference type="STRING" id="321327.CYA_0642"/>
<dbReference type="KEGG" id="cya:CYA_0642"/>
<dbReference type="HOGENOM" id="CLU_215415_0_0_3"/>
<dbReference type="OrthoDB" id="532820at2"/>
<dbReference type="Proteomes" id="UP000008818">
    <property type="component" value="Chromosome"/>
</dbReference>
<dbReference type="GO" id="GO:0009523">
    <property type="term" value="C:photosystem II"/>
    <property type="evidence" value="ECO:0007669"/>
    <property type="project" value="UniProtKB-KW"/>
</dbReference>
<dbReference type="GO" id="GO:0031676">
    <property type="term" value="C:plasma membrane-derived thylakoid membrane"/>
    <property type="evidence" value="ECO:0007669"/>
    <property type="project" value="UniProtKB-SubCell"/>
</dbReference>
<dbReference type="GO" id="GO:0019684">
    <property type="term" value="P:photosynthesis, light reaction"/>
    <property type="evidence" value="ECO:0007669"/>
    <property type="project" value="InterPro"/>
</dbReference>
<dbReference type="HAMAP" id="MF_00438">
    <property type="entry name" value="PSII_PsbM"/>
    <property type="match status" value="1"/>
</dbReference>
<dbReference type="InterPro" id="IPR007826">
    <property type="entry name" value="PSII_PsbM"/>
</dbReference>
<dbReference type="InterPro" id="IPR037269">
    <property type="entry name" value="PSII_PsbM_sf"/>
</dbReference>
<dbReference type="NCBIfam" id="TIGR03038">
    <property type="entry name" value="PS_II_psbM"/>
    <property type="match status" value="1"/>
</dbReference>
<dbReference type="Pfam" id="PF05151">
    <property type="entry name" value="PsbM"/>
    <property type="match status" value="1"/>
</dbReference>
<dbReference type="SUPFAM" id="SSF161033">
    <property type="entry name" value="Photosystem II reaction center protein M, PsbM"/>
    <property type="match status" value="1"/>
</dbReference>
<keyword id="KW-0472">Membrane</keyword>
<keyword id="KW-0602">Photosynthesis</keyword>
<keyword id="KW-0604">Photosystem II</keyword>
<keyword id="KW-0674">Reaction center</keyword>
<keyword id="KW-0793">Thylakoid</keyword>
<keyword id="KW-0812">Transmembrane</keyword>
<keyword id="KW-1133">Transmembrane helix</keyword>
<feature type="chain" id="PRO_1000025960" description="Photosystem II reaction center protein M">
    <location>
        <begin position="1"/>
        <end position="35"/>
    </location>
</feature>
<feature type="transmembrane region" description="Helical" evidence="1">
    <location>
        <begin position="7"/>
        <end position="27"/>
    </location>
</feature>
<protein>
    <recommendedName>
        <fullName evidence="1">Photosystem II reaction center protein M</fullName>
        <shortName evidence="1">PSII-M</shortName>
    </recommendedName>
</protein>
<name>PSBM_SYNJA</name>
<evidence type="ECO:0000255" key="1">
    <source>
        <dbReference type="HAMAP-Rule" id="MF_00438"/>
    </source>
</evidence>
<organism>
    <name type="scientific">Synechococcus sp. (strain JA-3-3Ab)</name>
    <name type="common">Cyanobacteria bacterium Yellowstone A-Prime</name>
    <dbReference type="NCBI Taxonomy" id="321327"/>
    <lineage>
        <taxon>Bacteria</taxon>
        <taxon>Bacillati</taxon>
        <taxon>Cyanobacteriota</taxon>
        <taxon>Cyanophyceae</taxon>
        <taxon>Synechococcales</taxon>
        <taxon>Synechococcaceae</taxon>
        <taxon>Synechococcus</taxon>
    </lineage>
</organism>
<sequence length="35" mass="3857">METNYLGLLATILVILVPSIFLVILYVQTSSKSES</sequence>
<reference key="1">
    <citation type="journal article" date="2007" name="ISME J.">
        <title>Population level functional diversity in a microbial community revealed by comparative genomic and metagenomic analyses.</title>
        <authorList>
            <person name="Bhaya D."/>
            <person name="Grossman A.R."/>
            <person name="Steunou A.-S."/>
            <person name="Khuri N."/>
            <person name="Cohan F.M."/>
            <person name="Hamamura N."/>
            <person name="Melendrez M.C."/>
            <person name="Bateson M.M."/>
            <person name="Ward D.M."/>
            <person name="Heidelberg J.F."/>
        </authorList>
    </citation>
    <scope>NUCLEOTIDE SEQUENCE [LARGE SCALE GENOMIC DNA]</scope>
    <source>
        <strain>JA-3-3Ab</strain>
    </source>
</reference>
<accession>Q2JWK3</accession>
<proteinExistence type="inferred from homology"/>